<accession>A5CVC6</accession>
<organism>
    <name type="scientific">Clavibacter michiganensis subsp. michiganensis (strain NCPPB 382)</name>
    <dbReference type="NCBI Taxonomy" id="443906"/>
    <lineage>
        <taxon>Bacteria</taxon>
        <taxon>Bacillati</taxon>
        <taxon>Actinomycetota</taxon>
        <taxon>Actinomycetes</taxon>
        <taxon>Micrococcales</taxon>
        <taxon>Microbacteriaceae</taxon>
        <taxon>Clavibacter</taxon>
    </lineage>
</organism>
<evidence type="ECO:0000255" key="1">
    <source>
        <dbReference type="HAMAP-Rule" id="MF_00391"/>
    </source>
</evidence>
<evidence type="ECO:0000305" key="2"/>
<comment type="similarity">
    <text evidence="1">Belongs to the bacterial ribosomal protein bL34 family.</text>
</comment>
<keyword id="KW-0687">Ribonucleoprotein</keyword>
<keyword id="KW-0689">Ribosomal protein</keyword>
<dbReference type="EMBL" id="AM711867">
    <property type="protein sequence ID" value="CAN03065.1"/>
    <property type="molecule type" value="Genomic_DNA"/>
</dbReference>
<dbReference type="RefSeq" id="WP_012039665.1">
    <property type="nucleotide sequence ID" value="NC_009480.1"/>
</dbReference>
<dbReference type="SMR" id="A5CVC6"/>
<dbReference type="GeneID" id="92984680"/>
<dbReference type="KEGG" id="cmi:CMM_2978"/>
<dbReference type="eggNOG" id="COG0230">
    <property type="taxonomic scope" value="Bacteria"/>
</dbReference>
<dbReference type="HOGENOM" id="CLU_129938_2_1_11"/>
<dbReference type="Proteomes" id="UP000001564">
    <property type="component" value="Chromosome"/>
</dbReference>
<dbReference type="GO" id="GO:1990904">
    <property type="term" value="C:ribonucleoprotein complex"/>
    <property type="evidence" value="ECO:0007669"/>
    <property type="project" value="UniProtKB-KW"/>
</dbReference>
<dbReference type="GO" id="GO:0005840">
    <property type="term" value="C:ribosome"/>
    <property type="evidence" value="ECO:0007669"/>
    <property type="project" value="UniProtKB-KW"/>
</dbReference>
<dbReference type="GO" id="GO:0003735">
    <property type="term" value="F:structural constituent of ribosome"/>
    <property type="evidence" value="ECO:0007669"/>
    <property type="project" value="InterPro"/>
</dbReference>
<dbReference type="GO" id="GO:0006412">
    <property type="term" value="P:translation"/>
    <property type="evidence" value="ECO:0007669"/>
    <property type="project" value="UniProtKB-UniRule"/>
</dbReference>
<dbReference type="FunFam" id="1.10.287.3980:FF:000001">
    <property type="entry name" value="Mitochondrial ribosomal protein L34"/>
    <property type="match status" value="1"/>
</dbReference>
<dbReference type="Gene3D" id="1.10.287.3980">
    <property type="match status" value="1"/>
</dbReference>
<dbReference type="HAMAP" id="MF_00391">
    <property type="entry name" value="Ribosomal_bL34"/>
    <property type="match status" value="1"/>
</dbReference>
<dbReference type="InterPro" id="IPR000271">
    <property type="entry name" value="Ribosomal_bL34"/>
</dbReference>
<dbReference type="InterPro" id="IPR020939">
    <property type="entry name" value="Ribosomal_bL34_CS"/>
</dbReference>
<dbReference type="NCBIfam" id="TIGR01030">
    <property type="entry name" value="rpmH_bact"/>
    <property type="match status" value="1"/>
</dbReference>
<dbReference type="PANTHER" id="PTHR14503:SF4">
    <property type="entry name" value="LARGE RIBOSOMAL SUBUNIT PROTEIN BL34M"/>
    <property type="match status" value="1"/>
</dbReference>
<dbReference type="PANTHER" id="PTHR14503">
    <property type="entry name" value="MITOCHONDRIAL RIBOSOMAL PROTEIN 34 FAMILY MEMBER"/>
    <property type="match status" value="1"/>
</dbReference>
<dbReference type="Pfam" id="PF00468">
    <property type="entry name" value="Ribosomal_L34"/>
    <property type="match status" value="1"/>
</dbReference>
<dbReference type="PROSITE" id="PS00784">
    <property type="entry name" value="RIBOSOMAL_L34"/>
    <property type="match status" value="1"/>
</dbReference>
<sequence>MSKRTFQPNNRKKAKKHGFRLRMRTRAGRAILAARRGKGRTELSA</sequence>
<name>RL34_CLAM3</name>
<protein>
    <recommendedName>
        <fullName evidence="1">Large ribosomal subunit protein bL34</fullName>
    </recommendedName>
    <alternativeName>
        <fullName evidence="2">50S ribosomal protein L34</fullName>
    </alternativeName>
</protein>
<feature type="chain" id="PRO_1000013317" description="Large ribosomal subunit protein bL34">
    <location>
        <begin position="1"/>
        <end position="45"/>
    </location>
</feature>
<gene>
    <name evidence="1" type="primary">rpmH</name>
    <name type="ordered locus">CMM_2978</name>
</gene>
<proteinExistence type="inferred from homology"/>
<reference key="1">
    <citation type="journal article" date="2008" name="J. Bacteriol.">
        <title>The genome sequence of the tomato-pathogenic actinomycete Clavibacter michiganensis subsp. michiganensis NCPPB382 reveals a large island involved in pathogenicity.</title>
        <authorList>
            <person name="Gartemann K.-H."/>
            <person name="Abt B."/>
            <person name="Bekel T."/>
            <person name="Burger A."/>
            <person name="Engemann J."/>
            <person name="Fluegel M."/>
            <person name="Gaigalat L."/>
            <person name="Goesmann A."/>
            <person name="Graefen I."/>
            <person name="Kalinowski J."/>
            <person name="Kaup O."/>
            <person name="Kirchner O."/>
            <person name="Krause L."/>
            <person name="Linke B."/>
            <person name="McHardy A."/>
            <person name="Meyer F."/>
            <person name="Pohle S."/>
            <person name="Rueckert C."/>
            <person name="Schneiker S."/>
            <person name="Zellermann E.-M."/>
            <person name="Puehler A."/>
            <person name="Eichenlaub R."/>
            <person name="Kaiser O."/>
            <person name="Bartels D."/>
        </authorList>
    </citation>
    <scope>NUCLEOTIDE SEQUENCE [LARGE SCALE GENOMIC DNA]</scope>
    <source>
        <strain>NCPPB 382</strain>
    </source>
</reference>